<proteinExistence type="evidence at transcript level"/>
<keyword id="KW-0149">Chlorophyll biosynthesis</keyword>
<keyword id="KW-0150">Chloroplast</keyword>
<keyword id="KW-0456">Lyase</keyword>
<keyword id="KW-0934">Plastid</keyword>
<keyword id="KW-0627">Porphyrin biosynthesis</keyword>
<keyword id="KW-1185">Reference proteome</keyword>
<keyword id="KW-0809">Transit peptide</keyword>
<comment type="function">
    <text evidence="1">Catalyzes cyclization of the linear tetrapyrrole, hydroxymethylbilane, to the macrocyclic uroporphyrinogen III, a precursor of tetrapyrroles such as chlorophyll, heme and phycobilins.</text>
</comment>
<comment type="catalytic activity">
    <reaction>
        <text>hydroxymethylbilane = uroporphyrinogen III + H2O</text>
        <dbReference type="Rhea" id="RHEA:18965"/>
        <dbReference type="ChEBI" id="CHEBI:15377"/>
        <dbReference type="ChEBI" id="CHEBI:57308"/>
        <dbReference type="ChEBI" id="CHEBI:57845"/>
        <dbReference type="EC" id="4.2.1.75"/>
    </reaction>
</comment>
<comment type="pathway">
    <text>Porphyrin-containing compound metabolism; protoporphyrin-IX biosynthesis; coproporphyrinogen-III from 5-aminolevulinate: step 3/4.</text>
</comment>
<comment type="subcellular location">
    <subcellularLocation>
        <location evidence="1">Plastid</location>
        <location evidence="1">Chloroplast</location>
    </subcellularLocation>
</comment>
<comment type="similarity">
    <text evidence="4">Belongs to the uroporphyrinogen-III synthase family.</text>
</comment>
<evidence type="ECO:0000250" key="1"/>
<evidence type="ECO:0000255" key="2"/>
<evidence type="ECO:0000256" key="3">
    <source>
        <dbReference type="SAM" id="MobiDB-lite"/>
    </source>
</evidence>
<evidence type="ECO:0000305" key="4"/>
<dbReference type="EC" id="4.2.1.75"/>
<dbReference type="EMBL" id="DP000009">
    <property type="protein sequence ID" value="ABF94358.1"/>
    <property type="molecule type" value="Genomic_DNA"/>
</dbReference>
<dbReference type="EMBL" id="AP008209">
    <property type="protein sequence ID" value="BAF11115.1"/>
    <property type="molecule type" value="Genomic_DNA"/>
</dbReference>
<dbReference type="EMBL" id="AP014959">
    <property type="protein sequence ID" value="BAS82675.1"/>
    <property type="molecule type" value="Genomic_DNA"/>
</dbReference>
<dbReference type="EMBL" id="AK107127">
    <property type="protein sequence ID" value="BAG97962.1"/>
    <property type="molecule type" value="mRNA"/>
</dbReference>
<dbReference type="RefSeq" id="XP_015630608.1">
    <property type="nucleotide sequence ID" value="XM_015775122.1"/>
</dbReference>
<dbReference type="SMR" id="Q10QR9"/>
<dbReference type="FunCoup" id="Q10QR9">
    <property type="interactions" value="970"/>
</dbReference>
<dbReference type="STRING" id="39947.Q10QR9"/>
<dbReference type="PaxDb" id="39947-Q10QR9"/>
<dbReference type="EnsemblPlants" id="Os03t0186100-01">
    <property type="protein sequence ID" value="Os03t0186100-01"/>
    <property type="gene ID" value="Os03g0186100"/>
</dbReference>
<dbReference type="Gramene" id="Os03t0186100-01">
    <property type="protein sequence ID" value="Os03t0186100-01"/>
    <property type="gene ID" value="Os03g0186100"/>
</dbReference>
<dbReference type="KEGG" id="dosa:Os03g0186100"/>
<dbReference type="eggNOG" id="ENOG502QST9">
    <property type="taxonomic scope" value="Eukaryota"/>
</dbReference>
<dbReference type="HOGENOM" id="CLU_011276_9_2_1"/>
<dbReference type="InParanoid" id="Q10QR9"/>
<dbReference type="OMA" id="WVESIME"/>
<dbReference type="OrthoDB" id="443551at2759"/>
<dbReference type="PlantReactome" id="R-OSA-4827054">
    <property type="pathway name" value="Tetrapyrrole biosynthesis I"/>
</dbReference>
<dbReference type="UniPathway" id="UPA00251">
    <property type="reaction ID" value="UER00320"/>
</dbReference>
<dbReference type="Proteomes" id="UP000000763">
    <property type="component" value="Chromosome 3"/>
</dbReference>
<dbReference type="Proteomes" id="UP000059680">
    <property type="component" value="Chromosome 3"/>
</dbReference>
<dbReference type="GO" id="GO:0009507">
    <property type="term" value="C:chloroplast"/>
    <property type="evidence" value="ECO:0000318"/>
    <property type="project" value="GO_Central"/>
</dbReference>
<dbReference type="GO" id="GO:0004852">
    <property type="term" value="F:uroporphyrinogen-III synthase activity"/>
    <property type="evidence" value="ECO:0000318"/>
    <property type="project" value="GO_Central"/>
</dbReference>
<dbReference type="GO" id="GO:0015995">
    <property type="term" value="P:chlorophyll biosynthetic process"/>
    <property type="evidence" value="ECO:0007669"/>
    <property type="project" value="UniProtKB-KW"/>
</dbReference>
<dbReference type="GO" id="GO:0006782">
    <property type="term" value="P:protoporphyrinogen IX biosynthetic process"/>
    <property type="evidence" value="ECO:0007669"/>
    <property type="project" value="UniProtKB-UniPathway"/>
</dbReference>
<dbReference type="GO" id="GO:0006780">
    <property type="term" value="P:uroporphyrinogen III biosynthetic process"/>
    <property type="evidence" value="ECO:0000318"/>
    <property type="project" value="GO_Central"/>
</dbReference>
<dbReference type="CDD" id="cd06578">
    <property type="entry name" value="HemD"/>
    <property type="match status" value="1"/>
</dbReference>
<dbReference type="FunFam" id="3.40.50.10090:FF:000016">
    <property type="entry name" value="Uroporphyrinogen-III synthase chloroplastic"/>
    <property type="match status" value="1"/>
</dbReference>
<dbReference type="FunFam" id="3.40.50.10090:FF:000024">
    <property type="entry name" value="Uroporphyrinogen-III synthase chloroplastic"/>
    <property type="match status" value="1"/>
</dbReference>
<dbReference type="Gene3D" id="3.40.50.10090">
    <property type="match status" value="2"/>
</dbReference>
<dbReference type="InterPro" id="IPR036108">
    <property type="entry name" value="4pyrrol_syn_uPrphyn_synt_sf"/>
</dbReference>
<dbReference type="InterPro" id="IPR003754">
    <property type="entry name" value="4pyrrol_synth_uPrphyn_synth"/>
</dbReference>
<dbReference type="InterPro" id="IPR039793">
    <property type="entry name" value="UROS/Hem4"/>
</dbReference>
<dbReference type="PANTHER" id="PTHR38042">
    <property type="entry name" value="UROPORPHYRINOGEN-III SYNTHASE, CHLOROPLASTIC"/>
    <property type="match status" value="1"/>
</dbReference>
<dbReference type="PANTHER" id="PTHR38042:SF1">
    <property type="entry name" value="UROPORPHYRINOGEN-III SYNTHASE, CHLOROPLASTIC"/>
    <property type="match status" value="1"/>
</dbReference>
<dbReference type="Pfam" id="PF02602">
    <property type="entry name" value="HEM4"/>
    <property type="match status" value="1"/>
</dbReference>
<dbReference type="SUPFAM" id="SSF69618">
    <property type="entry name" value="HemD-like"/>
    <property type="match status" value="1"/>
</dbReference>
<sequence length="302" mass="32123">MALSSSSHLLPFSRPPATFPRARHAGGGRGRAGATGRFIACSSPPPPDVVVTRERGKNAKLIAALEKHNVQSLELPLIKHVEGPDTDRLSAVLRDEKFDWITITSPEAAAVFLEGWKAAGNPKVRIAVVGAGTERVFDEVIQYNDGSLEVAFSPSKAMGKFLASELPRTTETTCKVLYPASAKAGHEIQNGLSNRGFEVTRLNTYTTVSVQDVDPLILKPALSAPVVAVASPSALRAWLNLASQVDNWGNAIACIGETTASAAKKFGLKSIYYPTTPGLDGWVESILEALRAHGQSKEAPGC</sequence>
<accession>Q10QR9</accession>
<accession>A0A0P0VU16</accession>
<gene>
    <name type="primary">UROS</name>
    <name type="synonym">HEMD</name>
    <name type="ordered locus">Os03g0186100</name>
    <name type="ordered locus">LOC_Os03g08730</name>
</gene>
<feature type="transit peptide" description="Chloroplast" evidence="2">
    <location>
        <begin position="1"/>
        <end position="50"/>
    </location>
</feature>
<feature type="chain" id="PRO_0000376068" description="Uroporphyrinogen-III synthase, chloroplastic">
    <location>
        <begin position="51"/>
        <end position="302"/>
    </location>
</feature>
<feature type="region of interest" description="Disordered" evidence="3">
    <location>
        <begin position="1"/>
        <end position="39"/>
    </location>
</feature>
<protein>
    <recommendedName>
        <fullName>Uroporphyrinogen-III synthase, chloroplastic</fullName>
        <ecNumber>4.2.1.75</ecNumber>
    </recommendedName>
    <alternativeName>
        <fullName>Hydroxymethylbilane hydrolyase [cyclizing]</fullName>
    </alternativeName>
    <alternativeName>
        <fullName>Uroporphyrinogen-III cosynthase</fullName>
    </alternativeName>
</protein>
<reference key="1">
    <citation type="journal article" date="2005" name="Genome Res.">
        <title>Sequence, annotation, and analysis of synteny between rice chromosome 3 and diverged grass species.</title>
        <authorList>
            <consortium name="The rice chromosome 3 sequencing consortium"/>
            <person name="Buell C.R."/>
            <person name="Yuan Q."/>
            <person name="Ouyang S."/>
            <person name="Liu J."/>
            <person name="Zhu W."/>
            <person name="Wang A."/>
            <person name="Maiti R."/>
            <person name="Haas B."/>
            <person name="Wortman J."/>
            <person name="Pertea M."/>
            <person name="Jones K.M."/>
            <person name="Kim M."/>
            <person name="Overton L."/>
            <person name="Tsitrin T."/>
            <person name="Fadrosh D."/>
            <person name="Bera J."/>
            <person name="Weaver B."/>
            <person name="Jin S."/>
            <person name="Johri S."/>
            <person name="Reardon M."/>
            <person name="Webb K."/>
            <person name="Hill J."/>
            <person name="Moffat K."/>
            <person name="Tallon L."/>
            <person name="Van Aken S."/>
            <person name="Lewis M."/>
            <person name="Utterback T."/>
            <person name="Feldblyum T."/>
            <person name="Zismann V."/>
            <person name="Iobst S."/>
            <person name="Hsiao J."/>
            <person name="de Vazeille A.R."/>
            <person name="Salzberg S.L."/>
            <person name="White O."/>
            <person name="Fraser C.M."/>
            <person name="Yu Y."/>
            <person name="Kim H."/>
            <person name="Rambo T."/>
            <person name="Currie J."/>
            <person name="Collura K."/>
            <person name="Kernodle-Thompson S."/>
            <person name="Wei F."/>
            <person name="Kudrna K."/>
            <person name="Ammiraju J.S.S."/>
            <person name="Luo M."/>
            <person name="Goicoechea J.L."/>
            <person name="Wing R.A."/>
            <person name="Henry D."/>
            <person name="Oates R."/>
            <person name="Palmer M."/>
            <person name="Pries G."/>
            <person name="Saski C."/>
            <person name="Simmons J."/>
            <person name="Soderlund C."/>
            <person name="Nelson W."/>
            <person name="de la Bastide M."/>
            <person name="Spiegel L."/>
            <person name="Nascimento L."/>
            <person name="Huang E."/>
            <person name="Preston R."/>
            <person name="Zutavern T."/>
            <person name="Palmer L."/>
            <person name="O'Shaughnessy A."/>
            <person name="Dike S."/>
            <person name="McCombie W.R."/>
            <person name="Minx P."/>
            <person name="Cordum H."/>
            <person name="Wilson R."/>
            <person name="Jin W."/>
            <person name="Lee H.R."/>
            <person name="Jiang J."/>
            <person name="Jackson S."/>
        </authorList>
    </citation>
    <scope>NUCLEOTIDE SEQUENCE [LARGE SCALE GENOMIC DNA]</scope>
    <source>
        <strain>cv. Nipponbare</strain>
    </source>
</reference>
<reference key="2">
    <citation type="journal article" date="2005" name="Nature">
        <title>The map-based sequence of the rice genome.</title>
        <authorList>
            <consortium name="International rice genome sequencing project (IRGSP)"/>
        </authorList>
    </citation>
    <scope>NUCLEOTIDE SEQUENCE [LARGE SCALE GENOMIC DNA]</scope>
    <source>
        <strain>cv. Nipponbare</strain>
    </source>
</reference>
<reference key="3">
    <citation type="journal article" date="2008" name="Nucleic Acids Res.">
        <title>The rice annotation project database (RAP-DB): 2008 update.</title>
        <authorList>
            <consortium name="The rice annotation project (RAP)"/>
        </authorList>
    </citation>
    <scope>GENOME REANNOTATION</scope>
    <source>
        <strain>cv. Nipponbare</strain>
    </source>
</reference>
<reference key="4">
    <citation type="journal article" date="2013" name="Rice">
        <title>Improvement of the Oryza sativa Nipponbare reference genome using next generation sequence and optical map data.</title>
        <authorList>
            <person name="Kawahara Y."/>
            <person name="de la Bastide M."/>
            <person name="Hamilton J.P."/>
            <person name="Kanamori H."/>
            <person name="McCombie W.R."/>
            <person name="Ouyang S."/>
            <person name="Schwartz D.C."/>
            <person name="Tanaka T."/>
            <person name="Wu J."/>
            <person name="Zhou S."/>
            <person name="Childs K.L."/>
            <person name="Davidson R.M."/>
            <person name="Lin H."/>
            <person name="Quesada-Ocampo L."/>
            <person name="Vaillancourt B."/>
            <person name="Sakai H."/>
            <person name="Lee S.S."/>
            <person name="Kim J."/>
            <person name="Numa H."/>
            <person name="Itoh T."/>
            <person name="Buell C.R."/>
            <person name="Matsumoto T."/>
        </authorList>
    </citation>
    <scope>GENOME REANNOTATION</scope>
    <source>
        <strain>cv. Nipponbare</strain>
    </source>
</reference>
<reference key="5">
    <citation type="journal article" date="2003" name="Science">
        <title>Collection, mapping, and annotation of over 28,000 cDNA clones from japonica rice.</title>
        <authorList>
            <consortium name="The rice full-length cDNA consortium"/>
        </authorList>
    </citation>
    <scope>NUCLEOTIDE SEQUENCE [LARGE SCALE MRNA]</scope>
    <source>
        <strain>cv. Nipponbare</strain>
    </source>
</reference>
<organism>
    <name type="scientific">Oryza sativa subsp. japonica</name>
    <name type="common">Rice</name>
    <dbReference type="NCBI Taxonomy" id="39947"/>
    <lineage>
        <taxon>Eukaryota</taxon>
        <taxon>Viridiplantae</taxon>
        <taxon>Streptophyta</taxon>
        <taxon>Embryophyta</taxon>
        <taxon>Tracheophyta</taxon>
        <taxon>Spermatophyta</taxon>
        <taxon>Magnoliopsida</taxon>
        <taxon>Liliopsida</taxon>
        <taxon>Poales</taxon>
        <taxon>Poaceae</taxon>
        <taxon>BOP clade</taxon>
        <taxon>Oryzoideae</taxon>
        <taxon>Oryzeae</taxon>
        <taxon>Oryzinae</taxon>
        <taxon>Oryza</taxon>
        <taxon>Oryza sativa</taxon>
    </lineage>
</organism>
<name>HEM4_ORYSJ</name>